<dbReference type="EC" id="6.1.1.17" evidence="1"/>
<dbReference type="EMBL" id="CP000116">
    <property type="protein sequence ID" value="AAZ97687.1"/>
    <property type="molecule type" value="Genomic_DNA"/>
</dbReference>
<dbReference type="SMR" id="Q3SI46"/>
<dbReference type="STRING" id="292415.Tbd_1734"/>
<dbReference type="KEGG" id="tbd:Tbd_1734"/>
<dbReference type="eggNOG" id="COG0008">
    <property type="taxonomic scope" value="Bacteria"/>
</dbReference>
<dbReference type="HOGENOM" id="CLU_015768_6_0_4"/>
<dbReference type="Proteomes" id="UP000008291">
    <property type="component" value="Chromosome"/>
</dbReference>
<dbReference type="GO" id="GO:0005829">
    <property type="term" value="C:cytosol"/>
    <property type="evidence" value="ECO:0007669"/>
    <property type="project" value="TreeGrafter"/>
</dbReference>
<dbReference type="GO" id="GO:0005524">
    <property type="term" value="F:ATP binding"/>
    <property type="evidence" value="ECO:0007669"/>
    <property type="project" value="UniProtKB-UniRule"/>
</dbReference>
<dbReference type="GO" id="GO:0004818">
    <property type="term" value="F:glutamate-tRNA ligase activity"/>
    <property type="evidence" value="ECO:0007669"/>
    <property type="project" value="UniProtKB-UniRule"/>
</dbReference>
<dbReference type="GO" id="GO:0000049">
    <property type="term" value="F:tRNA binding"/>
    <property type="evidence" value="ECO:0007669"/>
    <property type="project" value="InterPro"/>
</dbReference>
<dbReference type="GO" id="GO:0008270">
    <property type="term" value="F:zinc ion binding"/>
    <property type="evidence" value="ECO:0007669"/>
    <property type="project" value="InterPro"/>
</dbReference>
<dbReference type="GO" id="GO:0006424">
    <property type="term" value="P:glutamyl-tRNA aminoacylation"/>
    <property type="evidence" value="ECO:0007669"/>
    <property type="project" value="UniProtKB-UniRule"/>
</dbReference>
<dbReference type="CDD" id="cd00808">
    <property type="entry name" value="GluRS_core"/>
    <property type="match status" value="1"/>
</dbReference>
<dbReference type="FunFam" id="3.40.50.620:FF:000007">
    <property type="entry name" value="Glutamate--tRNA ligase"/>
    <property type="match status" value="1"/>
</dbReference>
<dbReference type="Gene3D" id="1.10.10.350">
    <property type="match status" value="1"/>
</dbReference>
<dbReference type="Gene3D" id="3.40.50.620">
    <property type="entry name" value="HUPs"/>
    <property type="match status" value="1"/>
</dbReference>
<dbReference type="HAMAP" id="MF_00022">
    <property type="entry name" value="Glu_tRNA_synth_type1"/>
    <property type="match status" value="1"/>
</dbReference>
<dbReference type="InterPro" id="IPR045462">
    <property type="entry name" value="aa-tRNA-synth_I_cd-bd"/>
</dbReference>
<dbReference type="InterPro" id="IPR020751">
    <property type="entry name" value="aa-tRNA-synth_I_codon-bd_sub2"/>
</dbReference>
<dbReference type="InterPro" id="IPR001412">
    <property type="entry name" value="aa-tRNA-synth_I_CS"/>
</dbReference>
<dbReference type="InterPro" id="IPR008925">
    <property type="entry name" value="aa_tRNA-synth_I_cd-bd_sf"/>
</dbReference>
<dbReference type="InterPro" id="IPR004527">
    <property type="entry name" value="Glu-tRNA-ligase_bac/mito"/>
</dbReference>
<dbReference type="InterPro" id="IPR000924">
    <property type="entry name" value="Glu/Gln-tRNA-synth"/>
</dbReference>
<dbReference type="InterPro" id="IPR020058">
    <property type="entry name" value="Glu/Gln-tRNA-synth_Ib_cat-dom"/>
</dbReference>
<dbReference type="InterPro" id="IPR049940">
    <property type="entry name" value="GluQ/Sye"/>
</dbReference>
<dbReference type="InterPro" id="IPR033910">
    <property type="entry name" value="GluRS_core"/>
</dbReference>
<dbReference type="InterPro" id="IPR014729">
    <property type="entry name" value="Rossmann-like_a/b/a_fold"/>
</dbReference>
<dbReference type="NCBIfam" id="TIGR00464">
    <property type="entry name" value="gltX_bact"/>
    <property type="match status" value="1"/>
</dbReference>
<dbReference type="PANTHER" id="PTHR43311">
    <property type="entry name" value="GLUTAMATE--TRNA LIGASE"/>
    <property type="match status" value="1"/>
</dbReference>
<dbReference type="PANTHER" id="PTHR43311:SF2">
    <property type="entry name" value="GLUTAMATE--TRNA LIGASE, MITOCHONDRIAL-RELATED"/>
    <property type="match status" value="1"/>
</dbReference>
<dbReference type="Pfam" id="PF19269">
    <property type="entry name" value="Anticodon_2"/>
    <property type="match status" value="1"/>
</dbReference>
<dbReference type="Pfam" id="PF00749">
    <property type="entry name" value="tRNA-synt_1c"/>
    <property type="match status" value="1"/>
</dbReference>
<dbReference type="PRINTS" id="PR00987">
    <property type="entry name" value="TRNASYNTHGLU"/>
</dbReference>
<dbReference type="SUPFAM" id="SSF48163">
    <property type="entry name" value="An anticodon-binding domain of class I aminoacyl-tRNA synthetases"/>
    <property type="match status" value="1"/>
</dbReference>
<dbReference type="SUPFAM" id="SSF52374">
    <property type="entry name" value="Nucleotidylyl transferase"/>
    <property type="match status" value="1"/>
</dbReference>
<dbReference type="PROSITE" id="PS00178">
    <property type="entry name" value="AA_TRNA_LIGASE_I"/>
    <property type="match status" value="1"/>
</dbReference>
<name>SYE_THIDA</name>
<protein>
    <recommendedName>
        <fullName evidence="1">Glutamate--tRNA ligase</fullName>
        <ecNumber evidence="1">6.1.1.17</ecNumber>
    </recommendedName>
    <alternativeName>
        <fullName evidence="1">Glutamyl-tRNA synthetase</fullName>
        <shortName evidence="1">GluRS</shortName>
    </alternativeName>
</protein>
<proteinExistence type="inferred from homology"/>
<gene>
    <name evidence="1" type="primary">gltX</name>
    <name type="ordered locus">Tbd_1734</name>
</gene>
<reference key="1">
    <citation type="journal article" date="2006" name="J. Bacteriol.">
        <title>The genome sequence of the obligately chemolithoautotrophic, facultatively anaerobic bacterium Thiobacillus denitrificans.</title>
        <authorList>
            <person name="Beller H.R."/>
            <person name="Chain P.S."/>
            <person name="Letain T.E."/>
            <person name="Chakicherla A."/>
            <person name="Larimer F.W."/>
            <person name="Richardson P.M."/>
            <person name="Coleman M.A."/>
            <person name="Wood A.P."/>
            <person name="Kelly D.P."/>
        </authorList>
    </citation>
    <scope>NUCLEOTIDE SEQUENCE [LARGE SCALE GENOMIC DNA]</scope>
    <source>
        <strain>ATCC 25259 / T1</strain>
    </source>
</reference>
<organism>
    <name type="scientific">Thiobacillus denitrificans (strain ATCC 25259 / T1)</name>
    <dbReference type="NCBI Taxonomy" id="292415"/>
    <lineage>
        <taxon>Bacteria</taxon>
        <taxon>Pseudomonadati</taxon>
        <taxon>Pseudomonadota</taxon>
        <taxon>Betaproteobacteria</taxon>
        <taxon>Nitrosomonadales</taxon>
        <taxon>Thiobacillaceae</taxon>
        <taxon>Thiobacillus</taxon>
    </lineage>
</organism>
<feature type="chain" id="PRO_0000237416" description="Glutamate--tRNA ligase">
    <location>
        <begin position="1"/>
        <end position="472"/>
    </location>
</feature>
<feature type="region of interest" description="Disordered" evidence="2">
    <location>
        <begin position="122"/>
        <end position="150"/>
    </location>
</feature>
<feature type="short sequence motif" description="'HIGH' region" evidence="1">
    <location>
        <begin position="18"/>
        <end position="28"/>
    </location>
</feature>
<feature type="short sequence motif" description="'KMSKS' region" evidence="1">
    <location>
        <begin position="250"/>
        <end position="254"/>
    </location>
</feature>
<feature type="compositionally biased region" description="Basic and acidic residues" evidence="2">
    <location>
        <begin position="122"/>
        <end position="138"/>
    </location>
</feature>
<feature type="binding site" evidence="1">
    <location>
        <position position="253"/>
    </location>
    <ligand>
        <name>ATP</name>
        <dbReference type="ChEBI" id="CHEBI:30616"/>
    </ligand>
</feature>
<evidence type="ECO:0000255" key="1">
    <source>
        <dbReference type="HAMAP-Rule" id="MF_00022"/>
    </source>
</evidence>
<evidence type="ECO:0000256" key="2">
    <source>
        <dbReference type="SAM" id="MobiDB-lite"/>
    </source>
</evidence>
<keyword id="KW-0030">Aminoacyl-tRNA synthetase</keyword>
<keyword id="KW-0067">ATP-binding</keyword>
<keyword id="KW-0963">Cytoplasm</keyword>
<keyword id="KW-0436">Ligase</keyword>
<keyword id="KW-0547">Nucleotide-binding</keyword>
<keyword id="KW-0648">Protein biosynthesis</keyword>
<keyword id="KW-1185">Reference proteome</keyword>
<sequence length="472" mass="52879">MAPFSRPHHPMIRTRFAPSPTGYLHIGGARTALFSWAFARHHGGQFVLRIEDTDIARSTPEAVQAILDGMAWLDLNHDEGPFYQTQRLYRYKEVIEQMLASGDAYHCYCSTEELDEMREAQRARGEKPRYDGRWRPEPGKTLPVPPSGVQPVVRFRNPTDGTVAWKDLVKGTIEFSNAELDDLIIARADGTPTYNFCVVVDDWDMRITHVIRGDDHVNNTPRQINILKALGATVPEYAHLSMILGDDGTKLSKRHGAVSVMQYFEEGYLPEAVINYLARLGWSHGDAELFDREQFVEWFDLDHITPSAAQFNTEKLRWLNQQYIKAADDTRLAGLARPFLIRNGATLDDGPDLAAVCALVKERAATIEALADAATLFYRVLHPTPELLAQHVTAEVRPALADLATRLETLEWERGAISAAFKETLAAHGLKMPKLAMPVRVLVTGEPQTPAIDATLELLGREKVLDRLRAAL</sequence>
<comment type="function">
    <text evidence="1">Catalyzes the attachment of glutamate to tRNA(Glu) in a two-step reaction: glutamate is first activated by ATP to form Glu-AMP and then transferred to the acceptor end of tRNA(Glu).</text>
</comment>
<comment type="catalytic activity">
    <reaction evidence="1">
        <text>tRNA(Glu) + L-glutamate + ATP = L-glutamyl-tRNA(Glu) + AMP + diphosphate</text>
        <dbReference type="Rhea" id="RHEA:23540"/>
        <dbReference type="Rhea" id="RHEA-COMP:9663"/>
        <dbReference type="Rhea" id="RHEA-COMP:9680"/>
        <dbReference type="ChEBI" id="CHEBI:29985"/>
        <dbReference type="ChEBI" id="CHEBI:30616"/>
        <dbReference type="ChEBI" id="CHEBI:33019"/>
        <dbReference type="ChEBI" id="CHEBI:78442"/>
        <dbReference type="ChEBI" id="CHEBI:78520"/>
        <dbReference type="ChEBI" id="CHEBI:456215"/>
        <dbReference type="EC" id="6.1.1.17"/>
    </reaction>
</comment>
<comment type="subunit">
    <text evidence="1">Monomer.</text>
</comment>
<comment type="subcellular location">
    <subcellularLocation>
        <location evidence="1">Cytoplasm</location>
    </subcellularLocation>
</comment>
<comment type="similarity">
    <text evidence="1">Belongs to the class-I aminoacyl-tRNA synthetase family. Glutamate--tRNA ligase type 1 subfamily.</text>
</comment>
<accession>Q3SI46</accession>